<reference key="1">
    <citation type="journal article" date="2009" name="Proc. Natl. Acad. Sci. U.S.A.">
        <title>Biogeography of the Sulfolobus islandicus pan-genome.</title>
        <authorList>
            <person name="Reno M.L."/>
            <person name="Held N.L."/>
            <person name="Fields C.J."/>
            <person name="Burke P.V."/>
            <person name="Whitaker R.J."/>
        </authorList>
    </citation>
    <scope>NUCLEOTIDE SEQUENCE [LARGE SCALE GENOMIC DNA]</scope>
    <source>
        <strain>Y.G.57.14 / Yellowstone #1</strain>
    </source>
</reference>
<protein>
    <recommendedName>
        <fullName evidence="1">Probable glycine dehydrogenase (decarboxylating) subunit 1</fullName>
        <ecNumber evidence="1">1.4.4.2</ecNumber>
    </recommendedName>
    <alternativeName>
        <fullName evidence="1">Glycine cleavage system P-protein subunit 1</fullName>
    </alternativeName>
    <alternativeName>
        <fullName evidence="1">Glycine decarboxylase subunit 1</fullName>
    </alternativeName>
    <alternativeName>
        <fullName evidence="1">Glycine dehydrogenase (aminomethyl-transferring) subunit 1</fullName>
    </alternativeName>
</protein>
<dbReference type="EC" id="1.4.4.2" evidence="1"/>
<dbReference type="EMBL" id="CP001403">
    <property type="protein sequence ID" value="ACP45564.1"/>
    <property type="molecule type" value="Genomic_DNA"/>
</dbReference>
<dbReference type="RefSeq" id="WP_012716145.1">
    <property type="nucleotide sequence ID" value="NC_012622.1"/>
</dbReference>
<dbReference type="SMR" id="C3NE25"/>
<dbReference type="GeneID" id="7807526"/>
<dbReference type="KEGG" id="siy:YG5714_1297"/>
<dbReference type="HOGENOM" id="CLU_004620_0_2_2"/>
<dbReference type="Proteomes" id="UP000002308">
    <property type="component" value="Chromosome"/>
</dbReference>
<dbReference type="GO" id="GO:0004375">
    <property type="term" value="F:glycine dehydrogenase (decarboxylating) activity"/>
    <property type="evidence" value="ECO:0007669"/>
    <property type="project" value="UniProtKB-EC"/>
</dbReference>
<dbReference type="GO" id="GO:0019464">
    <property type="term" value="P:glycine decarboxylation via glycine cleavage system"/>
    <property type="evidence" value="ECO:0007669"/>
    <property type="project" value="UniProtKB-UniRule"/>
</dbReference>
<dbReference type="GO" id="GO:0009116">
    <property type="term" value="P:nucleoside metabolic process"/>
    <property type="evidence" value="ECO:0007669"/>
    <property type="project" value="InterPro"/>
</dbReference>
<dbReference type="CDD" id="cd00613">
    <property type="entry name" value="GDC-P"/>
    <property type="match status" value="1"/>
</dbReference>
<dbReference type="Gene3D" id="3.90.1150.10">
    <property type="entry name" value="Aspartate Aminotransferase, domain 1"/>
    <property type="match status" value="1"/>
</dbReference>
<dbReference type="Gene3D" id="3.40.640.10">
    <property type="entry name" value="Type I PLP-dependent aspartate aminotransferase-like (Major domain)"/>
    <property type="match status" value="1"/>
</dbReference>
<dbReference type="HAMAP" id="MF_00712">
    <property type="entry name" value="GcvPA"/>
    <property type="match status" value="1"/>
</dbReference>
<dbReference type="InterPro" id="IPR023010">
    <property type="entry name" value="GcvPA"/>
</dbReference>
<dbReference type="InterPro" id="IPR049315">
    <property type="entry name" value="GDC-P_N"/>
</dbReference>
<dbReference type="InterPro" id="IPR020581">
    <property type="entry name" value="GDC_P"/>
</dbReference>
<dbReference type="InterPro" id="IPR015424">
    <property type="entry name" value="PyrdxlP-dep_Trfase"/>
</dbReference>
<dbReference type="InterPro" id="IPR015421">
    <property type="entry name" value="PyrdxlP-dep_Trfase_major"/>
</dbReference>
<dbReference type="InterPro" id="IPR015422">
    <property type="entry name" value="PyrdxlP-dep_Trfase_small"/>
</dbReference>
<dbReference type="NCBIfam" id="NF001696">
    <property type="entry name" value="PRK00451.1"/>
    <property type="match status" value="1"/>
</dbReference>
<dbReference type="PANTHER" id="PTHR42806">
    <property type="entry name" value="GLYCINE CLEAVAGE SYSTEM P-PROTEIN"/>
    <property type="match status" value="1"/>
</dbReference>
<dbReference type="PANTHER" id="PTHR42806:SF1">
    <property type="entry name" value="GLYCINE DEHYDROGENASE (DECARBOXYLATING)"/>
    <property type="match status" value="1"/>
</dbReference>
<dbReference type="Pfam" id="PF02347">
    <property type="entry name" value="GDC-P"/>
    <property type="match status" value="1"/>
</dbReference>
<dbReference type="PIRSF" id="PIRSF006815">
    <property type="entry name" value="GcvPA"/>
    <property type="match status" value="1"/>
</dbReference>
<dbReference type="SUPFAM" id="SSF53383">
    <property type="entry name" value="PLP-dependent transferases"/>
    <property type="match status" value="1"/>
</dbReference>
<proteinExistence type="inferred from homology"/>
<evidence type="ECO:0000255" key="1">
    <source>
        <dbReference type="HAMAP-Rule" id="MF_00712"/>
    </source>
</evidence>
<sequence length="455" mass="51306">MYKHPWLPNLDLIDEMLKEIGVNSLDELFNDIPAEIKINRLLNVAKGKPLSEYEIEKEINEKVKKNVELQAPPFIGAGICPHYIPNVVKFIIGRSEFYTSYTPYQPEISQGLLQALFEYQSLMAELLDMDVVNASMYDWGSALAEAVLMANRINGKKTVLVPENANPFHKEVVRTWIGGKGIKIEEVKYDKNSGELDLEDLEKKSNIDDISAIYIQQPNFFGIFESNIEHVIDVAKHKRALSIVGVNPLSLGLIKPPGSYEADIVVGDGQELGLPLNFGGPLMGVFAVRWDMSLVRQMPGRIVGITKDTNGKMGFTLILQTREQFIKREKATSNITTNEALLAIANAVYLSLLGKEGMRELTEEIYFRSHYAAKKLTEIDNVSMPFRSDFFEEFAIRFPIEYDKISNKLKERKLQGGLKLSDYTSLFCVTEVHDKKSIDLLVSTIQEMINGVETS</sequence>
<gene>
    <name evidence="1" type="primary">gcvPA</name>
    <name type="ordered locus">YG5714_1297</name>
</gene>
<organism>
    <name type="scientific">Saccharolobus islandicus (strain Y.G.57.14 / Yellowstone #1)</name>
    <name type="common">Sulfolobus islandicus</name>
    <dbReference type="NCBI Taxonomy" id="439386"/>
    <lineage>
        <taxon>Archaea</taxon>
        <taxon>Thermoproteota</taxon>
        <taxon>Thermoprotei</taxon>
        <taxon>Sulfolobales</taxon>
        <taxon>Sulfolobaceae</taxon>
        <taxon>Saccharolobus</taxon>
    </lineage>
</organism>
<accession>C3NE25</accession>
<name>GCSPA_SACI7</name>
<feature type="chain" id="PRO_1000212669" description="Probable glycine dehydrogenase (decarboxylating) subunit 1">
    <location>
        <begin position="1"/>
        <end position="455"/>
    </location>
</feature>
<keyword id="KW-0560">Oxidoreductase</keyword>
<comment type="function">
    <text evidence="1">The glycine cleavage system catalyzes the degradation of glycine. The P protein binds the alpha-amino group of glycine through its pyridoxal phosphate cofactor; CO(2) is released and the remaining methylamine moiety is then transferred to the lipoamide cofactor of the H protein.</text>
</comment>
<comment type="catalytic activity">
    <reaction evidence="1">
        <text>N(6)-[(R)-lipoyl]-L-lysyl-[glycine-cleavage complex H protein] + glycine + H(+) = N(6)-[(R)-S(8)-aminomethyldihydrolipoyl]-L-lysyl-[glycine-cleavage complex H protein] + CO2</text>
        <dbReference type="Rhea" id="RHEA:24304"/>
        <dbReference type="Rhea" id="RHEA-COMP:10494"/>
        <dbReference type="Rhea" id="RHEA-COMP:10495"/>
        <dbReference type="ChEBI" id="CHEBI:15378"/>
        <dbReference type="ChEBI" id="CHEBI:16526"/>
        <dbReference type="ChEBI" id="CHEBI:57305"/>
        <dbReference type="ChEBI" id="CHEBI:83099"/>
        <dbReference type="ChEBI" id="CHEBI:83143"/>
        <dbReference type="EC" id="1.4.4.2"/>
    </reaction>
</comment>
<comment type="subunit">
    <text evidence="1">The glycine cleavage system is composed of four proteins: P, T, L and H. In this organism, the P 'protein' is a heterodimer of two subunits.</text>
</comment>
<comment type="similarity">
    <text evidence="1">Belongs to the GcvP family. N-terminal subunit subfamily.</text>
</comment>